<feature type="chain" id="PRO_0000267335" description="dTTP/UTP pyrophosphatase">
    <location>
        <begin position="1"/>
        <end position="208"/>
    </location>
</feature>
<feature type="active site" description="Proton acceptor" evidence="1">
    <location>
        <position position="78"/>
    </location>
</feature>
<feature type="site" description="Important for substrate specificity" evidence="1">
    <location>
        <position position="21"/>
    </location>
</feature>
<feature type="site" description="Important for substrate specificity" evidence="1">
    <location>
        <position position="79"/>
    </location>
</feature>
<feature type="site" description="Important for substrate specificity" evidence="1">
    <location>
        <position position="162"/>
    </location>
</feature>
<protein>
    <recommendedName>
        <fullName evidence="1">dTTP/UTP pyrophosphatase</fullName>
        <shortName evidence="1">dTTPase/UTPase</shortName>
        <ecNumber evidence="1">3.6.1.9</ecNumber>
    </recommendedName>
    <alternativeName>
        <fullName evidence="1">Nucleoside triphosphate pyrophosphatase</fullName>
    </alternativeName>
    <alternativeName>
        <fullName evidence="1">Nucleotide pyrophosphatase</fullName>
        <shortName evidence="1">Nucleotide PPase</shortName>
    </alternativeName>
</protein>
<organism>
    <name type="scientific">Maricaulis maris (strain MCS10)</name>
    <name type="common">Caulobacter maris</name>
    <dbReference type="NCBI Taxonomy" id="394221"/>
    <lineage>
        <taxon>Bacteria</taxon>
        <taxon>Pseudomonadati</taxon>
        <taxon>Pseudomonadota</taxon>
        <taxon>Alphaproteobacteria</taxon>
        <taxon>Maricaulales</taxon>
        <taxon>Maricaulaceae</taxon>
        <taxon>Maricaulis</taxon>
    </lineage>
</organism>
<dbReference type="EC" id="3.6.1.9" evidence="1"/>
<dbReference type="EMBL" id="CP000449">
    <property type="protein sequence ID" value="ABI65424.1"/>
    <property type="molecule type" value="Genomic_DNA"/>
</dbReference>
<dbReference type="RefSeq" id="WP_011643071.1">
    <property type="nucleotide sequence ID" value="NC_008347.1"/>
</dbReference>
<dbReference type="SMR" id="Q0AQL3"/>
<dbReference type="STRING" id="394221.Mmar10_1131"/>
<dbReference type="KEGG" id="mmr:Mmar10_1131"/>
<dbReference type="eggNOG" id="COG0424">
    <property type="taxonomic scope" value="Bacteria"/>
</dbReference>
<dbReference type="HOGENOM" id="CLU_040416_2_0_5"/>
<dbReference type="OrthoDB" id="9807767at2"/>
<dbReference type="Proteomes" id="UP000001964">
    <property type="component" value="Chromosome"/>
</dbReference>
<dbReference type="GO" id="GO:0005737">
    <property type="term" value="C:cytoplasm"/>
    <property type="evidence" value="ECO:0007669"/>
    <property type="project" value="UniProtKB-SubCell"/>
</dbReference>
<dbReference type="GO" id="GO:0036218">
    <property type="term" value="F:dTTP diphosphatase activity"/>
    <property type="evidence" value="ECO:0007669"/>
    <property type="project" value="RHEA"/>
</dbReference>
<dbReference type="GO" id="GO:0036221">
    <property type="term" value="F:UTP diphosphatase activity"/>
    <property type="evidence" value="ECO:0007669"/>
    <property type="project" value="RHEA"/>
</dbReference>
<dbReference type="GO" id="GO:0009117">
    <property type="term" value="P:nucleotide metabolic process"/>
    <property type="evidence" value="ECO:0007669"/>
    <property type="project" value="UniProtKB-KW"/>
</dbReference>
<dbReference type="CDD" id="cd00555">
    <property type="entry name" value="Maf"/>
    <property type="match status" value="1"/>
</dbReference>
<dbReference type="Gene3D" id="3.90.950.10">
    <property type="match status" value="1"/>
</dbReference>
<dbReference type="HAMAP" id="MF_00528">
    <property type="entry name" value="Maf"/>
    <property type="match status" value="1"/>
</dbReference>
<dbReference type="InterPro" id="IPR029001">
    <property type="entry name" value="ITPase-like_fam"/>
</dbReference>
<dbReference type="InterPro" id="IPR003697">
    <property type="entry name" value="Maf-like"/>
</dbReference>
<dbReference type="NCBIfam" id="TIGR00172">
    <property type="entry name" value="maf"/>
    <property type="match status" value="1"/>
</dbReference>
<dbReference type="PANTHER" id="PTHR43213">
    <property type="entry name" value="BIFUNCTIONAL DTTP/UTP PYROPHOSPHATASE/METHYLTRANSFERASE PROTEIN-RELATED"/>
    <property type="match status" value="1"/>
</dbReference>
<dbReference type="PANTHER" id="PTHR43213:SF5">
    <property type="entry name" value="BIFUNCTIONAL DTTP_UTP PYROPHOSPHATASE_METHYLTRANSFERASE PROTEIN-RELATED"/>
    <property type="match status" value="1"/>
</dbReference>
<dbReference type="Pfam" id="PF02545">
    <property type="entry name" value="Maf"/>
    <property type="match status" value="1"/>
</dbReference>
<dbReference type="PIRSF" id="PIRSF006305">
    <property type="entry name" value="Maf"/>
    <property type="match status" value="1"/>
</dbReference>
<dbReference type="SUPFAM" id="SSF52972">
    <property type="entry name" value="ITPase-like"/>
    <property type="match status" value="1"/>
</dbReference>
<reference key="1">
    <citation type="submission" date="2006-08" db="EMBL/GenBank/DDBJ databases">
        <title>Complete sequence of Maricaulis maris MCS10.</title>
        <authorList>
            <consortium name="US DOE Joint Genome Institute"/>
            <person name="Copeland A."/>
            <person name="Lucas S."/>
            <person name="Lapidus A."/>
            <person name="Barry K."/>
            <person name="Detter J.C."/>
            <person name="Glavina del Rio T."/>
            <person name="Hammon N."/>
            <person name="Israni S."/>
            <person name="Dalin E."/>
            <person name="Tice H."/>
            <person name="Pitluck S."/>
            <person name="Saunders E."/>
            <person name="Brettin T."/>
            <person name="Bruce D."/>
            <person name="Han C."/>
            <person name="Tapia R."/>
            <person name="Gilna P."/>
            <person name="Schmutz J."/>
            <person name="Larimer F."/>
            <person name="Land M."/>
            <person name="Hauser L."/>
            <person name="Kyrpides N."/>
            <person name="Mikhailova N."/>
            <person name="Viollier P."/>
            <person name="Stephens C."/>
            <person name="Richardson P."/>
        </authorList>
    </citation>
    <scope>NUCLEOTIDE SEQUENCE [LARGE SCALE GENOMIC DNA]</scope>
    <source>
        <strain>MCS10</strain>
    </source>
</reference>
<accession>Q0AQL3</accession>
<sequence length="208" mass="22079">MTLADPALPRPRLILASASPRRFDLLSGAGLSPDAVEPTHIDEHEIPGELPGPLALRLAQEKAMAHPGSDDAFILAADTVVGVGRRILPKTETEAEARRCLDLLSGRNHRVFTGIAARGPDNRFAARVVETRVKFKRLSQPEIDAYIASGEWRGKAGGYAIQGRAGCFVINLIGSFTGVVGLPLYETANLLTGLGYPVTARMGEGGSA</sequence>
<proteinExistence type="inferred from homology"/>
<gene>
    <name type="ordered locus">Mmar10_1131</name>
</gene>
<comment type="function">
    <text evidence="1">Nucleoside triphosphate pyrophosphatase that hydrolyzes dTTP and UTP. May have a dual role in cell division arrest and in preventing the incorporation of modified nucleotides into cellular nucleic acids.</text>
</comment>
<comment type="catalytic activity">
    <reaction evidence="1">
        <text>dTTP + H2O = dTMP + diphosphate + H(+)</text>
        <dbReference type="Rhea" id="RHEA:28534"/>
        <dbReference type="ChEBI" id="CHEBI:15377"/>
        <dbReference type="ChEBI" id="CHEBI:15378"/>
        <dbReference type="ChEBI" id="CHEBI:33019"/>
        <dbReference type="ChEBI" id="CHEBI:37568"/>
        <dbReference type="ChEBI" id="CHEBI:63528"/>
        <dbReference type="EC" id="3.6.1.9"/>
    </reaction>
</comment>
<comment type="catalytic activity">
    <reaction evidence="1">
        <text>UTP + H2O = UMP + diphosphate + H(+)</text>
        <dbReference type="Rhea" id="RHEA:29395"/>
        <dbReference type="ChEBI" id="CHEBI:15377"/>
        <dbReference type="ChEBI" id="CHEBI:15378"/>
        <dbReference type="ChEBI" id="CHEBI:33019"/>
        <dbReference type="ChEBI" id="CHEBI:46398"/>
        <dbReference type="ChEBI" id="CHEBI:57865"/>
        <dbReference type="EC" id="3.6.1.9"/>
    </reaction>
</comment>
<comment type="cofactor">
    <cofactor evidence="1">
        <name>a divalent metal cation</name>
        <dbReference type="ChEBI" id="CHEBI:60240"/>
    </cofactor>
</comment>
<comment type="subcellular location">
    <subcellularLocation>
        <location evidence="1">Cytoplasm</location>
    </subcellularLocation>
</comment>
<comment type="similarity">
    <text evidence="1">Belongs to the Maf family. YhdE subfamily.</text>
</comment>
<evidence type="ECO:0000255" key="1">
    <source>
        <dbReference type="HAMAP-Rule" id="MF_00528"/>
    </source>
</evidence>
<keyword id="KW-0963">Cytoplasm</keyword>
<keyword id="KW-0378">Hydrolase</keyword>
<keyword id="KW-0546">Nucleotide metabolism</keyword>
<keyword id="KW-1185">Reference proteome</keyword>
<name>NTPPA_MARMM</name>